<gene>
    <name evidence="2" type="primary">rpsL</name>
    <name type="ordered locus">SbBS512_E3716</name>
</gene>
<reference key="1">
    <citation type="submission" date="2008-05" db="EMBL/GenBank/DDBJ databases">
        <title>Complete sequence of Shigella boydii serotype 18 strain BS512.</title>
        <authorList>
            <person name="Rasko D.A."/>
            <person name="Rosovitz M."/>
            <person name="Maurelli A.T."/>
            <person name="Myers G."/>
            <person name="Seshadri R."/>
            <person name="Cer R."/>
            <person name="Jiang L."/>
            <person name="Ravel J."/>
            <person name="Sebastian Y."/>
        </authorList>
    </citation>
    <scope>NUCLEOTIDE SEQUENCE [LARGE SCALE GENOMIC DNA]</scope>
    <source>
        <strain>CDC 3083-94 / BS512</strain>
    </source>
</reference>
<feature type="chain" id="PRO_1000123519" description="Small ribosomal subunit protein uS12">
    <location>
        <begin position="1"/>
        <end position="124"/>
    </location>
</feature>
<feature type="modified residue" description="3-methylthioaspartic acid" evidence="1">
    <location>
        <position position="89"/>
    </location>
</feature>
<feature type="modified residue" description="N6-acetyllysine" evidence="2">
    <location>
        <position position="108"/>
    </location>
</feature>
<protein>
    <recommendedName>
        <fullName evidence="2">Small ribosomal subunit protein uS12</fullName>
    </recommendedName>
    <alternativeName>
        <fullName evidence="3">30S ribosomal protein S12</fullName>
    </alternativeName>
</protein>
<keyword id="KW-0007">Acetylation</keyword>
<keyword id="KW-0488">Methylation</keyword>
<keyword id="KW-1185">Reference proteome</keyword>
<keyword id="KW-0687">Ribonucleoprotein</keyword>
<keyword id="KW-0689">Ribosomal protein</keyword>
<keyword id="KW-0694">RNA-binding</keyword>
<keyword id="KW-0699">rRNA-binding</keyword>
<keyword id="KW-0820">tRNA-binding</keyword>
<accession>B2U2U9</accession>
<comment type="function">
    <text evidence="2">With S4 and S5 plays an important role in translational accuracy.</text>
</comment>
<comment type="function">
    <text evidence="2">Interacts with and stabilizes bases of the 16S rRNA that are involved in tRNA selection in the A site and with the mRNA backbone. Located at the interface of the 30S and 50S subunits, it traverses the body of the 30S subunit contacting proteins on the other side and probably holding the rRNA structure together. The combined cluster of proteins S8, S12 and S17 appears to hold together the shoulder and platform of the 30S subunit.</text>
</comment>
<comment type="subunit">
    <text evidence="2">Part of the 30S ribosomal subunit. Contacts proteins S8 and S17. May interact with IF1 in the 30S initiation complex.</text>
</comment>
<comment type="similarity">
    <text evidence="2">Belongs to the universal ribosomal protein uS12 family.</text>
</comment>
<name>RS12_SHIB3</name>
<dbReference type="EMBL" id="CP001063">
    <property type="protein sequence ID" value="ACD09893.1"/>
    <property type="molecule type" value="Genomic_DNA"/>
</dbReference>
<dbReference type="RefSeq" id="WP_000246815.1">
    <property type="nucleotide sequence ID" value="NC_010658.1"/>
</dbReference>
<dbReference type="SMR" id="B2U2U9"/>
<dbReference type="STRING" id="344609.SbBS512_E3716"/>
<dbReference type="GeneID" id="98390450"/>
<dbReference type="KEGG" id="sbc:SbBS512_E3716"/>
<dbReference type="HOGENOM" id="CLU_104295_1_2_6"/>
<dbReference type="Proteomes" id="UP000001030">
    <property type="component" value="Chromosome"/>
</dbReference>
<dbReference type="GO" id="GO:0015935">
    <property type="term" value="C:small ribosomal subunit"/>
    <property type="evidence" value="ECO:0007669"/>
    <property type="project" value="InterPro"/>
</dbReference>
<dbReference type="GO" id="GO:0019843">
    <property type="term" value="F:rRNA binding"/>
    <property type="evidence" value="ECO:0007669"/>
    <property type="project" value="UniProtKB-UniRule"/>
</dbReference>
<dbReference type="GO" id="GO:0003735">
    <property type="term" value="F:structural constituent of ribosome"/>
    <property type="evidence" value="ECO:0007669"/>
    <property type="project" value="InterPro"/>
</dbReference>
<dbReference type="GO" id="GO:0000049">
    <property type="term" value="F:tRNA binding"/>
    <property type="evidence" value="ECO:0007669"/>
    <property type="project" value="UniProtKB-UniRule"/>
</dbReference>
<dbReference type="GO" id="GO:0006412">
    <property type="term" value="P:translation"/>
    <property type="evidence" value="ECO:0007669"/>
    <property type="project" value="UniProtKB-UniRule"/>
</dbReference>
<dbReference type="CDD" id="cd03368">
    <property type="entry name" value="Ribosomal_S12"/>
    <property type="match status" value="1"/>
</dbReference>
<dbReference type="FunFam" id="2.40.50.140:FF:000001">
    <property type="entry name" value="30S ribosomal protein S12"/>
    <property type="match status" value="1"/>
</dbReference>
<dbReference type="Gene3D" id="2.40.50.140">
    <property type="entry name" value="Nucleic acid-binding proteins"/>
    <property type="match status" value="1"/>
</dbReference>
<dbReference type="HAMAP" id="MF_00403_B">
    <property type="entry name" value="Ribosomal_uS12_B"/>
    <property type="match status" value="1"/>
</dbReference>
<dbReference type="InterPro" id="IPR012340">
    <property type="entry name" value="NA-bd_OB-fold"/>
</dbReference>
<dbReference type="InterPro" id="IPR006032">
    <property type="entry name" value="Ribosomal_uS12"/>
</dbReference>
<dbReference type="InterPro" id="IPR005679">
    <property type="entry name" value="Ribosomal_uS12_bac"/>
</dbReference>
<dbReference type="NCBIfam" id="TIGR00981">
    <property type="entry name" value="rpsL_bact"/>
    <property type="match status" value="1"/>
</dbReference>
<dbReference type="PANTHER" id="PTHR11652">
    <property type="entry name" value="30S RIBOSOMAL PROTEIN S12 FAMILY MEMBER"/>
    <property type="match status" value="1"/>
</dbReference>
<dbReference type="Pfam" id="PF00164">
    <property type="entry name" value="Ribosom_S12_S23"/>
    <property type="match status" value="1"/>
</dbReference>
<dbReference type="PIRSF" id="PIRSF002133">
    <property type="entry name" value="Ribosomal_S12/S23"/>
    <property type="match status" value="1"/>
</dbReference>
<dbReference type="PRINTS" id="PR01034">
    <property type="entry name" value="RIBOSOMALS12"/>
</dbReference>
<dbReference type="SUPFAM" id="SSF50249">
    <property type="entry name" value="Nucleic acid-binding proteins"/>
    <property type="match status" value="1"/>
</dbReference>
<dbReference type="PROSITE" id="PS00055">
    <property type="entry name" value="RIBOSOMAL_S12"/>
    <property type="match status" value="1"/>
</dbReference>
<organism>
    <name type="scientific">Shigella boydii serotype 18 (strain CDC 3083-94 / BS512)</name>
    <dbReference type="NCBI Taxonomy" id="344609"/>
    <lineage>
        <taxon>Bacteria</taxon>
        <taxon>Pseudomonadati</taxon>
        <taxon>Pseudomonadota</taxon>
        <taxon>Gammaproteobacteria</taxon>
        <taxon>Enterobacterales</taxon>
        <taxon>Enterobacteriaceae</taxon>
        <taxon>Shigella</taxon>
    </lineage>
</organism>
<sequence>MATVNQLVRKPRARKVAKSNVPALEACPQKRGVCTRVYTTTPKKPNSALRKVCRVRLTNGFEVTSYIGGEGHNLQEHSVILIRGGRVKDLPGVRYHTVRGALDCSGVKDRKQARSKYGVKRPKA</sequence>
<evidence type="ECO:0000250" key="1"/>
<evidence type="ECO:0000255" key="2">
    <source>
        <dbReference type="HAMAP-Rule" id="MF_00403"/>
    </source>
</evidence>
<evidence type="ECO:0000305" key="3"/>
<proteinExistence type="inferred from homology"/>